<name>BCHN_CHLAA</name>
<comment type="function">
    <text evidence="1">Component of the dark-operative protochlorophyllide reductase (DPOR) that uses Mg-ATP and reduced ferredoxin to reduce ring D of protochlorophyllide (Pchlide) to form chlorophyllide a (Chlide). This reaction is light-independent. The NB-protein (BchN-BchB) is the catalytic component of the complex.</text>
</comment>
<comment type="catalytic activity">
    <reaction evidence="1">
        <text>chlorophyllide a + oxidized 2[4Fe-4S]-[ferredoxin] + 2 ADP + 2 phosphate = protochlorophyllide a + reduced 2[4Fe-4S]-[ferredoxin] + 2 ATP + 2 H2O</text>
        <dbReference type="Rhea" id="RHEA:28202"/>
        <dbReference type="Rhea" id="RHEA-COMP:10002"/>
        <dbReference type="Rhea" id="RHEA-COMP:10004"/>
        <dbReference type="ChEBI" id="CHEBI:15377"/>
        <dbReference type="ChEBI" id="CHEBI:30616"/>
        <dbReference type="ChEBI" id="CHEBI:33722"/>
        <dbReference type="ChEBI" id="CHEBI:33723"/>
        <dbReference type="ChEBI" id="CHEBI:43474"/>
        <dbReference type="ChEBI" id="CHEBI:83348"/>
        <dbReference type="ChEBI" id="CHEBI:83350"/>
        <dbReference type="ChEBI" id="CHEBI:456216"/>
        <dbReference type="EC" id="1.3.7.7"/>
    </reaction>
</comment>
<comment type="cofactor">
    <cofactor evidence="1">
        <name>[4Fe-4S] cluster</name>
        <dbReference type="ChEBI" id="CHEBI:49883"/>
    </cofactor>
    <text evidence="1">Binds 1 [4Fe-4S] cluster per heterodimer. The cluster is bound at the heterodimer interface by residues from both subunits.</text>
</comment>
<comment type="pathway">
    <text evidence="1">Porphyrin-containing compound metabolism; bacteriochlorophyll biosynthesis (light-independent).</text>
</comment>
<comment type="subunit">
    <text evidence="1">Protochlorophyllide reductase is composed of three subunits; BchL, BchN and BchB. Forms a heterotetramer of two BchB and two BchN subunits.</text>
</comment>
<comment type="similarity">
    <text evidence="1">Belongs to the BchN/ChlN family.</text>
</comment>
<comment type="sequence caution" evidence="2">
    <conflict type="erroneous initiation">
        <sequence resource="EMBL-CDS" id="ABY35763"/>
    </conflict>
</comment>
<organism>
    <name type="scientific">Chloroflexus aurantiacus (strain ATCC 29366 / DSM 635 / J-10-fl)</name>
    <dbReference type="NCBI Taxonomy" id="324602"/>
    <lineage>
        <taxon>Bacteria</taxon>
        <taxon>Bacillati</taxon>
        <taxon>Chloroflexota</taxon>
        <taxon>Chloroflexia</taxon>
        <taxon>Chloroflexales</taxon>
        <taxon>Chloroflexineae</taxon>
        <taxon>Chloroflexaceae</taxon>
        <taxon>Chloroflexus</taxon>
    </lineage>
</organism>
<dbReference type="EC" id="1.3.7.7" evidence="1"/>
<dbReference type="EMBL" id="AF288460">
    <property type="protein sequence ID" value="AAG15209.1"/>
    <property type="molecule type" value="Genomic_DNA"/>
</dbReference>
<dbReference type="EMBL" id="CP000909">
    <property type="protein sequence ID" value="ABY35763.1"/>
    <property type="status" value="ALT_INIT"/>
    <property type="molecule type" value="Genomic_DNA"/>
</dbReference>
<dbReference type="RefSeq" id="YP_001636152.1">
    <property type="nucleotide sequence ID" value="NC_010175.1"/>
</dbReference>
<dbReference type="SMR" id="Q9F6X6"/>
<dbReference type="STRING" id="324602.Caur_2557"/>
<dbReference type="EnsemblBacteria" id="ABY35763">
    <property type="protein sequence ID" value="ABY35763"/>
    <property type="gene ID" value="Caur_2557"/>
</dbReference>
<dbReference type="KEGG" id="cau:Caur_2557"/>
<dbReference type="PATRIC" id="fig|324602.8.peg.2882"/>
<dbReference type="eggNOG" id="COG2710">
    <property type="taxonomic scope" value="Bacteria"/>
</dbReference>
<dbReference type="HOGENOM" id="CLU_037170_0_0_0"/>
<dbReference type="InParanoid" id="Q9F6X6"/>
<dbReference type="UniPathway" id="UPA00671"/>
<dbReference type="Proteomes" id="UP000002008">
    <property type="component" value="Chromosome"/>
</dbReference>
<dbReference type="GO" id="GO:0051539">
    <property type="term" value="F:4 iron, 4 sulfur cluster binding"/>
    <property type="evidence" value="ECO:0007669"/>
    <property type="project" value="UniProtKB-UniRule"/>
</dbReference>
<dbReference type="GO" id="GO:0005524">
    <property type="term" value="F:ATP binding"/>
    <property type="evidence" value="ECO:0007669"/>
    <property type="project" value="UniProtKB-UniRule"/>
</dbReference>
<dbReference type="GO" id="GO:0046872">
    <property type="term" value="F:metal ion binding"/>
    <property type="evidence" value="ECO:0007669"/>
    <property type="project" value="UniProtKB-KW"/>
</dbReference>
<dbReference type="GO" id="GO:0016730">
    <property type="term" value="F:oxidoreductase activity, acting on iron-sulfur proteins as donors"/>
    <property type="evidence" value="ECO:0007669"/>
    <property type="project" value="InterPro"/>
</dbReference>
<dbReference type="GO" id="GO:0016636">
    <property type="term" value="F:oxidoreductase activity, acting on the CH-CH group of donors, iron-sulfur protein as acceptor"/>
    <property type="evidence" value="ECO:0007669"/>
    <property type="project" value="UniProtKB-UniRule"/>
</dbReference>
<dbReference type="GO" id="GO:0036070">
    <property type="term" value="P:light-independent bacteriochlorophyll biosynthetic process"/>
    <property type="evidence" value="ECO:0007669"/>
    <property type="project" value="UniProtKB-UniRule"/>
</dbReference>
<dbReference type="GO" id="GO:0019685">
    <property type="term" value="P:photosynthesis, dark reaction"/>
    <property type="evidence" value="ECO:0007669"/>
    <property type="project" value="InterPro"/>
</dbReference>
<dbReference type="Gene3D" id="3.40.50.1980">
    <property type="entry name" value="Nitrogenase molybdenum iron protein domain"/>
    <property type="match status" value="3"/>
</dbReference>
<dbReference type="HAMAP" id="MF_00352">
    <property type="entry name" value="ChlN_BchN"/>
    <property type="match status" value="1"/>
</dbReference>
<dbReference type="InterPro" id="IPR050293">
    <property type="entry name" value="LIPOR_BchN/ChlN"/>
</dbReference>
<dbReference type="InterPro" id="IPR000510">
    <property type="entry name" value="Nase/OxRdtase_comp1"/>
</dbReference>
<dbReference type="InterPro" id="IPR005970">
    <property type="entry name" value="Protochl_reductN"/>
</dbReference>
<dbReference type="NCBIfam" id="TIGR01279">
    <property type="entry name" value="DPOR_bchN"/>
    <property type="match status" value="1"/>
</dbReference>
<dbReference type="NCBIfam" id="NF002768">
    <property type="entry name" value="PRK02842.1"/>
    <property type="match status" value="1"/>
</dbReference>
<dbReference type="PANTHER" id="PTHR39429">
    <property type="entry name" value="LIGHT-INDEPENDENT PROTOCHLOROPHYLLIDE REDUCTASE SUBUNIT N"/>
    <property type="match status" value="1"/>
</dbReference>
<dbReference type="PANTHER" id="PTHR39429:SF3">
    <property type="entry name" value="LIGHT-INDEPENDENT PROTOCHLOROPHYLLIDE REDUCTASE SUBUNIT N"/>
    <property type="match status" value="1"/>
</dbReference>
<dbReference type="Pfam" id="PF00148">
    <property type="entry name" value="Oxidored_nitro"/>
    <property type="match status" value="1"/>
</dbReference>
<dbReference type="PIRSF" id="PIRSF000162">
    <property type="entry name" value="P_chlorophyll_rd"/>
    <property type="match status" value="1"/>
</dbReference>
<dbReference type="SUPFAM" id="SSF53807">
    <property type="entry name" value="Helical backbone' metal receptor"/>
    <property type="match status" value="1"/>
</dbReference>
<proteinExistence type="inferred from homology"/>
<gene>
    <name evidence="1" type="primary">bchN</name>
    <name type="ordered locus">Caur_2557</name>
</gene>
<protein>
    <recommendedName>
        <fullName evidence="1">Light-independent protochlorophyllide reductase subunit N</fullName>
        <shortName evidence="1">DPOR subunit N</shortName>
        <shortName evidence="1">LI-POR subunit N</shortName>
        <ecNumber evidence="1">1.3.7.7</ecNumber>
    </recommendedName>
</protein>
<sequence>MFLNPVVPNGYYNLRGGAMQSKATPIREDGIYHSFCGLVSVGWLYQKIKDSFFLILGTHTCAHLLQNTLGVMIFARPRFAVSLLEESDLSSSQPDISAQIEEIKREHHPSVIFLLSSCTPEVMKVEFEGLAASVSTPEVPVLFVPASGLDYTFSQSEDSVLQALIPFCPPAPPDDKRVVFLGSVNDAIADDFSLEAARLGIPVAGFLPASHFTELPPIGPGTVIAPLQPYLHKTATQLRNERGCTVLSSLFPFGPDGTRRFWEDLAAQFGMQVDLSEREAAAWERIKHHTDLLRGKKIFFASDTLMELPLARFLKACGAEVVECSTPYINRRFHAAELAALDGVRLVEQANFHRQLRTITETKPDLIISNIITTNPLVGQGTVAKWGTEYCFLPIHGWAGVNNLVTSFTRALQRHARLDPLGSDPIWLTGMMPGSSGGVISLQS</sequence>
<keyword id="KW-0004">4Fe-4S</keyword>
<keyword id="KW-0067">ATP-binding</keyword>
<keyword id="KW-0077">Bacteriochlorophyll biosynthesis</keyword>
<keyword id="KW-0149">Chlorophyll biosynthesis</keyword>
<keyword id="KW-0408">Iron</keyword>
<keyword id="KW-0411">Iron-sulfur</keyword>
<keyword id="KW-0479">Metal-binding</keyword>
<keyword id="KW-0547">Nucleotide-binding</keyword>
<keyword id="KW-0560">Oxidoreductase</keyword>
<keyword id="KW-0602">Photosynthesis</keyword>
<keyword id="KW-1185">Reference proteome</keyword>
<accession>Q9F6X6</accession>
<accession>A9WIN6</accession>
<feature type="chain" id="PRO_0000208593" description="Light-independent protochlorophyllide reductase subunit N">
    <location>
        <begin position="1"/>
        <end position="444"/>
    </location>
</feature>
<feature type="binding site" evidence="1">
    <location>
        <position position="36"/>
    </location>
    <ligand>
        <name>[4Fe-4S] cluster</name>
        <dbReference type="ChEBI" id="CHEBI:49883"/>
        <note>ligand shared with heterodimeric partner</note>
    </ligand>
</feature>
<feature type="binding site" evidence="1">
    <location>
        <position position="61"/>
    </location>
    <ligand>
        <name>[4Fe-4S] cluster</name>
        <dbReference type="ChEBI" id="CHEBI:49883"/>
        <note>ligand shared with heterodimeric partner</note>
    </ligand>
</feature>
<feature type="binding site" evidence="1">
    <location>
        <position position="118"/>
    </location>
    <ligand>
        <name>[4Fe-4S] cluster</name>
        <dbReference type="ChEBI" id="CHEBI:49883"/>
        <note>ligand shared with heterodimeric partner</note>
    </ligand>
</feature>
<evidence type="ECO:0000255" key="1">
    <source>
        <dbReference type="HAMAP-Rule" id="MF_00352"/>
    </source>
</evidence>
<evidence type="ECO:0000305" key="2"/>
<reference key="1">
    <citation type="journal article" date="2000" name="Science">
        <title>Molecular evidence for the early evolution of photosynthesis.</title>
        <authorList>
            <person name="Xiong J."/>
            <person name="Fischer W.M."/>
            <person name="Inoue K."/>
            <person name="Nakahara M."/>
            <person name="Bauer C.E."/>
        </authorList>
    </citation>
    <scope>NUCLEOTIDE SEQUENCE [GENOMIC DNA]</scope>
</reference>
<reference key="2">
    <citation type="journal article" date="2011" name="BMC Genomics">
        <title>Complete genome sequence of the filamentous anoxygenic phototrophic bacterium Chloroflexus aurantiacus.</title>
        <authorList>
            <person name="Tang K.H."/>
            <person name="Barry K."/>
            <person name="Chertkov O."/>
            <person name="Dalin E."/>
            <person name="Han C.S."/>
            <person name="Hauser L.J."/>
            <person name="Honchak B.M."/>
            <person name="Karbach L.E."/>
            <person name="Land M.L."/>
            <person name="Lapidus A."/>
            <person name="Larimer F.W."/>
            <person name="Mikhailova N."/>
            <person name="Pitluck S."/>
            <person name="Pierson B.K."/>
            <person name="Blankenship R.E."/>
        </authorList>
    </citation>
    <scope>NUCLEOTIDE SEQUENCE [LARGE SCALE GENOMIC DNA]</scope>
    <source>
        <strain>ATCC 29366 / DSM 635 / J-10-fl</strain>
    </source>
</reference>